<gene>
    <name evidence="5" type="primary">Vps35l</name>
</gene>
<accession>Q5XI83</accession>
<organism>
    <name type="scientific">Rattus norvegicus</name>
    <name type="common">Rat</name>
    <dbReference type="NCBI Taxonomy" id="10116"/>
    <lineage>
        <taxon>Eukaryota</taxon>
        <taxon>Metazoa</taxon>
        <taxon>Chordata</taxon>
        <taxon>Craniata</taxon>
        <taxon>Vertebrata</taxon>
        <taxon>Euteleostomi</taxon>
        <taxon>Mammalia</taxon>
        <taxon>Eutheria</taxon>
        <taxon>Euarchontoglires</taxon>
        <taxon>Glires</taxon>
        <taxon>Rodentia</taxon>
        <taxon>Myomorpha</taxon>
        <taxon>Muroidea</taxon>
        <taxon>Muridae</taxon>
        <taxon>Murinae</taxon>
        <taxon>Rattus</taxon>
    </lineage>
</organism>
<sequence>MAVFPWHSRNRNYKAELASCRLETVPLECGDYHPLKPITVTESKTKKVSRKGSTSSTSSSSSSSVVDPLSSVLDGTDPLSMFAATSDPAATVTVTESSRKKRDKDDNSFVGPDFEPWANKRGEILARYTTTEKLSINLFMGSEKGRAGAAASAMSEKVRTRLEELDDFEEGSQKELLNLTQQDYVNRIEELNQSLKDAWASDQKVKALKIVIQCSKLLSDTSVIQFYPSKFVLITDILDTFGKLVYERIYSMCVDSRGALPDHFSPENVNDTAKETCLNWFFKIASIRELIPRFYVEASILKCNKFLSKTGISECLPRLTCMIRGIGDPLVSVYARAYLCRVGMEVAPHLKESLTRNFFDFLLTFKQIHGDTVQNQLVAQGVELLSYLPLYSPAMGWIFQCVSYHAPEALLTEMMERCKKLGNNALLLNSVMSAFRAEFIATRSMDFIGMIKECDESGFPKHLLFRSLGVNLALADPPENDRLQILNEAWKVITKLKSPQDYINCAEVWVEYTCRHFTKREVNTVLADVIKHMTPDRAFEDSYPQLQSIIKKVIAHFHDFSVLFSVEKFLPFLDMFQKESVRVEVCKCIMEAFINALTLEDEKRMLAHLINGFIKMVSFGRDFEQQLSFYVESRSMFCNLEPVLVQLIHSVNRLAMETRKVMKGNHSRKTAAFVRACVAYCFITIPSLVGIFTRLNLYLHSGQVALANQCLSQADAFFKAAISLVPEVPKSISIDGKLRPSEPFLLEFLCNFFSTLLIVPDHPEHGVLFLVRELLNVIQDYTWEDSSDDKIRIYTSVLHLLSAMSQDTYLYHIDKVDSNDSLYGGDSRFLAENSKLCEAAMVQILEHLKTLAKDEALKRQSLLGLSFFNSILAHGDLRNNKLNQLSVNLWHLAQRHGCADTRTMVKTLDYIKKRSKQPDMNHLSELALRLPLQTRT</sequence>
<evidence type="ECO:0000250" key="1">
    <source>
        <dbReference type="UniProtKB" id="Q7Z3J2"/>
    </source>
</evidence>
<evidence type="ECO:0000255" key="2"/>
<evidence type="ECO:0000256" key="3">
    <source>
        <dbReference type="SAM" id="MobiDB-lite"/>
    </source>
</evidence>
<evidence type="ECO:0000305" key="4"/>
<evidence type="ECO:0000312" key="5">
    <source>
        <dbReference type="RGD" id="1564485"/>
    </source>
</evidence>
<proteinExistence type="evidence at transcript level"/>
<protein>
    <recommendedName>
        <fullName evidence="4">VPS35 endosomal protein-sorting factor-like</fullName>
    </recommendedName>
</protein>
<reference key="1">
    <citation type="journal article" date="2004" name="Genome Res.">
        <title>The status, quality, and expansion of the NIH full-length cDNA project: the Mammalian Gene Collection (MGC).</title>
        <authorList>
            <consortium name="The MGC Project Team"/>
        </authorList>
    </citation>
    <scope>NUCLEOTIDE SEQUENCE [LARGE SCALE MRNA]</scope>
    <source>
        <tissue>Kidney</tissue>
    </source>
</reference>
<name>VP35L_RAT</name>
<keyword id="KW-0967">Endosome</keyword>
<keyword id="KW-0472">Membrane</keyword>
<keyword id="KW-0597">Phosphoprotein</keyword>
<keyword id="KW-0653">Protein transport</keyword>
<keyword id="KW-1185">Reference proteome</keyword>
<keyword id="KW-0812">Transmembrane</keyword>
<keyword id="KW-1133">Transmembrane helix</keyword>
<keyword id="KW-0813">Transport</keyword>
<comment type="function">
    <text evidence="1">Acts as a component of the retriever complex. The retriever complex is a heterotrimeric complex related to retromer cargo-selective complex (CSC) and essential for retromer-independent retrieval and recycling of numerous cargos such as integrin alpha-5/beta-1 (ITGA5:ITGB1). The recruitment of the retriever complex to the endosomal membrane involves CCC and WASH complexes. In the endosomes, drives the retrieval and recycling of NxxY-motif-containing cargo proteins by coupling to SNX17, a cargo essential for the homeostatic maintenance of numerous cell surface proteins associated with processes that include cell migration, cell adhesion, nutrient supply and cell signaling. Involved in copper-dependent ATP7A trafficking between the trans-Golgi network and vesicles in the cell periphery; the function is proposed to depend on its association with the CCC complex and cooperation with the WASH complex on early endosomes. Seems not to be required for CCC complex stability.</text>
</comment>
<comment type="subunit">
    <text evidence="1">Component of the heterotrimeric retriever complex formed by VPS26C, VPS29 and VPS35L. Interacts with VPS29. Interacts with COMMD1, CCDC93 and CCDC22; associates with the CCC (COMMD/CCDC22/CCDC93) complex which contains at least COMMD1 (and possibly other COMM domain-containing proteins), CCDC22 and CCDC93. Interacts with WASHC1, WASHC2A and WASHC2C. Interacts with SNX17 and SNX31.</text>
</comment>
<comment type="subcellular location">
    <subcellularLocation>
        <location evidence="2">Membrane</location>
        <topology evidence="2">Single-pass membrane protein</topology>
    </subcellularLocation>
    <subcellularLocation>
        <location evidence="1">Endosome</location>
    </subcellularLocation>
    <text evidence="1">Endosome location is dependent of the association with the CCC and WASH complexes.</text>
</comment>
<comment type="similarity">
    <text evidence="4">Belongs to the VPS35L family.</text>
</comment>
<feature type="chain" id="PRO_0000311355" description="VPS35 endosomal protein-sorting factor-like">
    <location>
        <begin position="1"/>
        <end position="936"/>
    </location>
</feature>
<feature type="transmembrane region" description="Helical" evidence="2">
    <location>
        <begin position="672"/>
        <end position="692"/>
    </location>
</feature>
<feature type="region of interest" description="Disordered" evidence="3">
    <location>
        <begin position="43"/>
        <end position="69"/>
    </location>
</feature>
<feature type="region of interest" description="Disordered" evidence="3">
    <location>
        <begin position="87"/>
        <end position="113"/>
    </location>
</feature>
<feature type="compositionally biased region" description="Low complexity" evidence="3">
    <location>
        <begin position="51"/>
        <end position="69"/>
    </location>
</feature>
<feature type="modified residue" description="Phosphoserine" evidence="1">
    <location>
        <position position="265"/>
    </location>
</feature>
<dbReference type="EMBL" id="BC083805">
    <property type="protein sequence ID" value="AAH83805.1"/>
    <property type="molecule type" value="mRNA"/>
</dbReference>
<dbReference type="RefSeq" id="NP_001017463.1">
    <property type="nucleotide sequence ID" value="NM_001017463.2"/>
</dbReference>
<dbReference type="SMR" id="Q5XI83"/>
<dbReference type="FunCoup" id="Q5XI83">
    <property type="interactions" value="4725"/>
</dbReference>
<dbReference type="IntAct" id="Q5XI83">
    <property type="interactions" value="1"/>
</dbReference>
<dbReference type="STRING" id="10116.ENSRNOP00000069151"/>
<dbReference type="iPTMnet" id="Q5XI83"/>
<dbReference type="PhosphoSitePlus" id="Q5XI83"/>
<dbReference type="jPOST" id="Q5XI83"/>
<dbReference type="PaxDb" id="10116-ENSRNOP00000043528"/>
<dbReference type="Ensembl" id="ENSRNOT00000050393.3">
    <property type="protein sequence ID" value="ENSRNOP00000043528.2"/>
    <property type="gene ID" value="ENSRNOG00000016063.8"/>
</dbReference>
<dbReference type="GeneID" id="361635"/>
<dbReference type="KEGG" id="rno:361635"/>
<dbReference type="UCSC" id="RGD:1564485">
    <property type="organism name" value="rat"/>
</dbReference>
<dbReference type="AGR" id="RGD:1564485"/>
<dbReference type="CTD" id="57020"/>
<dbReference type="RGD" id="1564485">
    <property type="gene designation" value="Vps35l"/>
</dbReference>
<dbReference type="eggNOG" id="KOG3682">
    <property type="taxonomic scope" value="Eukaryota"/>
</dbReference>
<dbReference type="GeneTree" id="ENSGT00390000011343"/>
<dbReference type="HOGENOM" id="CLU_012270_0_0_1"/>
<dbReference type="InParanoid" id="Q5XI83"/>
<dbReference type="Reactome" id="R-RNO-6798695">
    <property type="pathway name" value="Neutrophil degranulation"/>
</dbReference>
<dbReference type="PRO" id="PR:Q5XI83"/>
<dbReference type="Proteomes" id="UP000002494">
    <property type="component" value="Chromosome 1"/>
</dbReference>
<dbReference type="Bgee" id="ENSRNOG00000016063">
    <property type="expression patterns" value="Expressed in ovary and 19 other cell types or tissues"/>
</dbReference>
<dbReference type="ExpressionAtlas" id="Q5XI83">
    <property type="expression patterns" value="baseline and differential"/>
</dbReference>
<dbReference type="GO" id="GO:0005768">
    <property type="term" value="C:endosome"/>
    <property type="evidence" value="ECO:0000250"/>
    <property type="project" value="UniProtKB"/>
</dbReference>
<dbReference type="GO" id="GO:0016020">
    <property type="term" value="C:membrane"/>
    <property type="evidence" value="ECO:0007669"/>
    <property type="project" value="UniProtKB-SubCell"/>
</dbReference>
<dbReference type="GO" id="GO:0032456">
    <property type="term" value="P:endocytic recycling"/>
    <property type="evidence" value="ECO:0000250"/>
    <property type="project" value="UniProtKB"/>
</dbReference>
<dbReference type="GO" id="GO:0006893">
    <property type="term" value="P:Golgi to plasma membrane transport"/>
    <property type="evidence" value="ECO:0000266"/>
    <property type="project" value="RGD"/>
</dbReference>
<dbReference type="GO" id="GO:0015031">
    <property type="term" value="P:protein transport"/>
    <property type="evidence" value="ECO:0007669"/>
    <property type="project" value="UniProtKB-KW"/>
</dbReference>
<dbReference type="InterPro" id="IPR029705">
    <property type="entry name" value="VPS35L"/>
</dbReference>
<dbReference type="PANTHER" id="PTHR13673">
    <property type="entry name" value="ESOPHAGEAL CANCER ASSOCIATED PROTEIN"/>
    <property type="match status" value="1"/>
</dbReference>
<dbReference type="PANTHER" id="PTHR13673:SF0">
    <property type="entry name" value="VPS35 ENDOSOMAL PROTEIN-SORTING FACTOR-LIKE"/>
    <property type="match status" value="1"/>
</dbReference>